<reference key="1">
    <citation type="journal article" date="2005" name="Science">
        <title>The transcriptional landscape of the mammalian genome.</title>
        <authorList>
            <person name="Carninci P."/>
            <person name="Kasukawa T."/>
            <person name="Katayama S."/>
            <person name="Gough J."/>
            <person name="Frith M.C."/>
            <person name="Maeda N."/>
            <person name="Oyama R."/>
            <person name="Ravasi T."/>
            <person name="Lenhard B."/>
            <person name="Wells C."/>
            <person name="Kodzius R."/>
            <person name="Shimokawa K."/>
            <person name="Bajic V.B."/>
            <person name="Brenner S.E."/>
            <person name="Batalov S."/>
            <person name="Forrest A.R."/>
            <person name="Zavolan M."/>
            <person name="Davis M.J."/>
            <person name="Wilming L.G."/>
            <person name="Aidinis V."/>
            <person name="Allen J.E."/>
            <person name="Ambesi-Impiombato A."/>
            <person name="Apweiler R."/>
            <person name="Aturaliya R.N."/>
            <person name="Bailey T.L."/>
            <person name="Bansal M."/>
            <person name="Baxter L."/>
            <person name="Beisel K.W."/>
            <person name="Bersano T."/>
            <person name="Bono H."/>
            <person name="Chalk A.M."/>
            <person name="Chiu K.P."/>
            <person name="Choudhary V."/>
            <person name="Christoffels A."/>
            <person name="Clutterbuck D.R."/>
            <person name="Crowe M.L."/>
            <person name="Dalla E."/>
            <person name="Dalrymple B.P."/>
            <person name="de Bono B."/>
            <person name="Della Gatta G."/>
            <person name="di Bernardo D."/>
            <person name="Down T."/>
            <person name="Engstrom P."/>
            <person name="Fagiolini M."/>
            <person name="Faulkner G."/>
            <person name="Fletcher C.F."/>
            <person name="Fukushima T."/>
            <person name="Furuno M."/>
            <person name="Futaki S."/>
            <person name="Gariboldi M."/>
            <person name="Georgii-Hemming P."/>
            <person name="Gingeras T.R."/>
            <person name="Gojobori T."/>
            <person name="Green R.E."/>
            <person name="Gustincich S."/>
            <person name="Harbers M."/>
            <person name="Hayashi Y."/>
            <person name="Hensch T.K."/>
            <person name="Hirokawa N."/>
            <person name="Hill D."/>
            <person name="Huminiecki L."/>
            <person name="Iacono M."/>
            <person name="Ikeo K."/>
            <person name="Iwama A."/>
            <person name="Ishikawa T."/>
            <person name="Jakt M."/>
            <person name="Kanapin A."/>
            <person name="Katoh M."/>
            <person name="Kawasawa Y."/>
            <person name="Kelso J."/>
            <person name="Kitamura H."/>
            <person name="Kitano H."/>
            <person name="Kollias G."/>
            <person name="Krishnan S.P."/>
            <person name="Kruger A."/>
            <person name="Kummerfeld S.K."/>
            <person name="Kurochkin I.V."/>
            <person name="Lareau L.F."/>
            <person name="Lazarevic D."/>
            <person name="Lipovich L."/>
            <person name="Liu J."/>
            <person name="Liuni S."/>
            <person name="McWilliam S."/>
            <person name="Madan Babu M."/>
            <person name="Madera M."/>
            <person name="Marchionni L."/>
            <person name="Matsuda H."/>
            <person name="Matsuzawa S."/>
            <person name="Miki H."/>
            <person name="Mignone F."/>
            <person name="Miyake S."/>
            <person name="Morris K."/>
            <person name="Mottagui-Tabar S."/>
            <person name="Mulder N."/>
            <person name="Nakano N."/>
            <person name="Nakauchi H."/>
            <person name="Ng P."/>
            <person name="Nilsson R."/>
            <person name="Nishiguchi S."/>
            <person name="Nishikawa S."/>
            <person name="Nori F."/>
            <person name="Ohara O."/>
            <person name="Okazaki Y."/>
            <person name="Orlando V."/>
            <person name="Pang K.C."/>
            <person name="Pavan W.J."/>
            <person name="Pavesi G."/>
            <person name="Pesole G."/>
            <person name="Petrovsky N."/>
            <person name="Piazza S."/>
            <person name="Reed J."/>
            <person name="Reid J.F."/>
            <person name="Ring B.Z."/>
            <person name="Ringwald M."/>
            <person name="Rost B."/>
            <person name="Ruan Y."/>
            <person name="Salzberg S.L."/>
            <person name="Sandelin A."/>
            <person name="Schneider C."/>
            <person name="Schoenbach C."/>
            <person name="Sekiguchi K."/>
            <person name="Semple C.A."/>
            <person name="Seno S."/>
            <person name="Sessa L."/>
            <person name="Sheng Y."/>
            <person name="Shibata Y."/>
            <person name="Shimada H."/>
            <person name="Shimada K."/>
            <person name="Silva D."/>
            <person name="Sinclair B."/>
            <person name="Sperling S."/>
            <person name="Stupka E."/>
            <person name="Sugiura K."/>
            <person name="Sultana R."/>
            <person name="Takenaka Y."/>
            <person name="Taki K."/>
            <person name="Tammoja K."/>
            <person name="Tan S.L."/>
            <person name="Tang S."/>
            <person name="Taylor M.S."/>
            <person name="Tegner J."/>
            <person name="Teichmann S.A."/>
            <person name="Ueda H.R."/>
            <person name="van Nimwegen E."/>
            <person name="Verardo R."/>
            <person name="Wei C.L."/>
            <person name="Yagi K."/>
            <person name="Yamanishi H."/>
            <person name="Zabarovsky E."/>
            <person name="Zhu S."/>
            <person name="Zimmer A."/>
            <person name="Hide W."/>
            <person name="Bult C."/>
            <person name="Grimmond S.M."/>
            <person name="Teasdale R.D."/>
            <person name="Liu E.T."/>
            <person name="Brusic V."/>
            <person name="Quackenbush J."/>
            <person name="Wahlestedt C."/>
            <person name="Mattick J.S."/>
            <person name="Hume D.A."/>
            <person name="Kai C."/>
            <person name="Sasaki D."/>
            <person name="Tomaru Y."/>
            <person name="Fukuda S."/>
            <person name="Kanamori-Katayama M."/>
            <person name="Suzuki M."/>
            <person name="Aoki J."/>
            <person name="Arakawa T."/>
            <person name="Iida J."/>
            <person name="Imamura K."/>
            <person name="Itoh M."/>
            <person name="Kato T."/>
            <person name="Kawaji H."/>
            <person name="Kawagashira N."/>
            <person name="Kawashima T."/>
            <person name="Kojima M."/>
            <person name="Kondo S."/>
            <person name="Konno H."/>
            <person name="Nakano K."/>
            <person name="Ninomiya N."/>
            <person name="Nishio T."/>
            <person name="Okada M."/>
            <person name="Plessy C."/>
            <person name="Shibata K."/>
            <person name="Shiraki T."/>
            <person name="Suzuki S."/>
            <person name="Tagami M."/>
            <person name="Waki K."/>
            <person name="Watahiki A."/>
            <person name="Okamura-Oho Y."/>
            <person name="Suzuki H."/>
            <person name="Kawai J."/>
            <person name="Hayashizaki Y."/>
        </authorList>
    </citation>
    <scope>NUCLEOTIDE SEQUENCE [LARGE SCALE MRNA]</scope>
    <source>
        <strain>NOD</strain>
        <tissue>Spleen</tissue>
    </source>
</reference>
<reference key="2">
    <citation type="journal article" date="2004" name="Genome Res.">
        <title>The status, quality, and expansion of the NIH full-length cDNA project: the Mammalian Gene Collection (MGC).</title>
        <authorList>
            <consortium name="The MGC Project Team"/>
        </authorList>
    </citation>
    <scope>NUCLEOTIDE SEQUENCE [LARGE SCALE MRNA]</scope>
</reference>
<keyword id="KW-0342">GTP-binding</keyword>
<keyword id="KW-0378">Hydrolase</keyword>
<keyword id="KW-0547">Nucleotide-binding</keyword>
<keyword id="KW-1185">Reference proteome</keyword>
<accession>Q08AT1</accession>
<accession>Q3TAU9</accession>
<protein>
    <recommendedName>
        <fullName>Ras-like protein family member 12</fullName>
        <ecNumber evidence="2">3.6.5.2</ecNumber>
    </recommendedName>
</protein>
<proteinExistence type="evidence at transcript level"/>
<organism>
    <name type="scientific">Mus musculus</name>
    <name type="common">Mouse</name>
    <dbReference type="NCBI Taxonomy" id="10090"/>
    <lineage>
        <taxon>Eukaryota</taxon>
        <taxon>Metazoa</taxon>
        <taxon>Chordata</taxon>
        <taxon>Craniata</taxon>
        <taxon>Vertebrata</taxon>
        <taxon>Euteleostomi</taxon>
        <taxon>Mammalia</taxon>
        <taxon>Eutheria</taxon>
        <taxon>Euarchontoglires</taxon>
        <taxon>Glires</taxon>
        <taxon>Rodentia</taxon>
        <taxon>Myomorpha</taxon>
        <taxon>Muroidea</taxon>
        <taxon>Muridae</taxon>
        <taxon>Murinae</taxon>
        <taxon>Mus</taxon>
        <taxon>Mus</taxon>
    </lineage>
</organism>
<name>RASLC_MOUSE</name>
<evidence type="ECO:0000250" key="1"/>
<evidence type="ECO:0000250" key="2">
    <source>
        <dbReference type="UniProtKB" id="P01116"/>
    </source>
</evidence>
<evidence type="ECO:0000305" key="3"/>
<gene>
    <name type="primary">Rasl12</name>
</gene>
<feature type="chain" id="PRO_0000333869" description="Ras-like protein family member 12">
    <location>
        <begin position="1"/>
        <end position="266"/>
    </location>
</feature>
<feature type="binding site" evidence="1">
    <location>
        <begin position="27"/>
        <end position="34"/>
    </location>
    <ligand>
        <name>GTP</name>
        <dbReference type="ChEBI" id="CHEBI:37565"/>
    </ligand>
</feature>
<feature type="binding site" evidence="1">
    <location>
        <begin position="74"/>
        <end position="78"/>
    </location>
    <ligand>
        <name>GTP</name>
        <dbReference type="ChEBI" id="CHEBI:37565"/>
    </ligand>
</feature>
<feature type="binding site" evidence="1">
    <location>
        <begin position="134"/>
        <end position="137"/>
    </location>
    <ligand>
        <name>GTP</name>
        <dbReference type="ChEBI" id="CHEBI:37565"/>
    </ligand>
</feature>
<feature type="sequence conflict" description="In Ref. 1; BAE42569." evidence="3" ref="1">
    <original>T</original>
    <variation>A</variation>
    <location>
        <position position="56"/>
    </location>
</feature>
<sequence>MSSVFGKPRAGSGPHSVPLEVNLAILGRRGAGKSALTVKFLTKRFISEYDPNLEDTYSSEETVDHQPVHLRVMDTADLDTPRNCERYLNWAHAFLVVYSVDSRASFEGSSSYLELLALHAKETQRGYPALLLGNKLDMAQYRQVTKAEGAALAGRFGCLFFEVSACLDFEHVQHVFHEAVREVRRELDKSPLARPLFISEEKTLSHQTPLTARHGLASCTFNTLSTASLKEMPTVAQAKLVTVKSSRAQSKRKAPTLTLLKGFKIF</sequence>
<comment type="catalytic activity">
    <reaction evidence="2">
        <text>GTP + H2O = GDP + phosphate + H(+)</text>
        <dbReference type="Rhea" id="RHEA:19669"/>
        <dbReference type="ChEBI" id="CHEBI:15377"/>
        <dbReference type="ChEBI" id="CHEBI:15378"/>
        <dbReference type="ChEBI" id="CHEBI:37565"/>
        <dbReference type="ChEBI" id="CHEBI:43474"/>
        <dbReference type="ChEBI" id="CHEBI:58189"/>
        <dbReference type="EC" id="3.6.5.2"/>
    </reaction>
</comment>
<comment type="similarity">
    <text evidence="3">Belongs to the small GTPase superfamily. Ras family.</text>
</comment>
<dbReference type="EC" id="3.6.5.2" evidence="2"/>
<dbReference type="EMBL" id="AK171623">
    <property type="protein sequence ID" value="BAE42569.1"/>
    <property type="molecule type" value="mRNA"/>
</dbReference>
<dbReference type="EMBL" id="BC125036">
    <property type="protein sequence ID" value="AAI25037.1"/>
    <property type="molecule type" value="mRNA"/>
</dbReference>
<dbReference type="CCDS" id="CCDS23290.1"/>
<dbReference type="RefSeq" id="NP_001028330.2">
    <property type="nucleotide sequence ID" value="NM_001033158.2"/>
</dbReference>
<dbReference type="SMR" id="Q08AT1"/>
<dbReference type="BioGRID" id="214251">
    <property type="interactions" value="2"/>
</dbReference>
<dbReference type="FunCoup" id="Q08AT1">
    <property type="interactions" value="1056"/>
</dbReference>
<dbReference type="STRING" id="10090.ENSMUSP00000082580"/>
<dbReference type="iPTMnet" id="Q08AT1"/>
<dbReference type="PhosphoSitePlus" id="Q08AT1"/>
<dbReference type="PaxDb" id="10090-ENSMUSP00000082580"/>
<dbReference type="ProteomicsDB" id="300242"/>
<dbReference type="Antibodypedia" id="25905">
    <property type="antibodies" value="131 antibodies from 19 providers"/>
</dbReference>
<dbReference type="DNASU" id="70784"/>
<dbReference type="Ensembl" id="ENSMUST00000085453.6">
    <property type="protein sequence ID" value="ENSMUSP00000082580.5"/>
    <property type="gene ID" value="ENSMUSG00000041696.15"/>
</dbReference>
<dbReference type="GeneID" id="70784"/>
<dbReference type="KEGG" id="mmu:70784"/>
<dbReference type="UCSC" id="uc009qdf.2">
    <property type="organism name" value="mouse"/>
</dbReference>
<dbReference type="AGR" id="MGI:1918034"/>
<dbReference type="CTD" id="51285"/>
<dbReference type="MGI" id="MGI:1918034">
    <property type="gene designation" value="Rasl12"/>
</dbReference>
<dbReference type="VEuPathDB" id="HostDB:ENSMUSG00000041696"/>
<dbReference type="eggNOG" id="KOG0395">
    <property type="taxonomic scope" value="Eukaryota"/>
</dbReference>
<dbReference type="GeneTree" id="ENSGT00940000160167"/>
<dbReference type="HOGENOM" id="CLU_041217_9_4_1"/>
<dbReference type="InParanoid" id="Q08AT1"/>
<dbReference type="OMA" id="VYSIDNM"/>
<dbReference type="OrthoDB" id="18798at2759"/>
<dbReference type="PhylomeDB" id="Q08AT1"/>
<dbReference type="TreeFam" id="TF318030"/>
<dbReference type="BioGRID-ORCS" id="70784">
    <property type="hits" value="2 hits in 76 CRISPR screens"/>
</dbReference>
<dbReference type="ChiTaRS" id="Rasl12">
    <property type="organism name" value="mouse"/>
</dbReference>
<dbReference type="PRO" id="PR:Q08AT1"/>
<dbReference type="Proteomes" id="UP000000589">
    <property type="component" value="Chromosome 9"/>
</dbReference>
<dbReference type="RNAct" id="Q08AT1">
    <property type="molecule type" value="protein"/>
</dbReference>
<dbReference type="Bgee" id="ENSMUSG00000041696">
    <property type="expression patterns" value="Expressed in aorta tunica media and 155 other cell types or tissues"/>
</dbReference>
<dbReference type="ExpressionAtlas" id="Q08AT1">
    <property type="expression patterns" value="baseline and differential"/>
</dbReference>
<dbReference type="GO" id="GO:0003925">
    <property type="term" value="F:G protein activity"/>
    <property type="evidence" value="ECO:0007669"/>
    <property type="project" value="UniProtKB-EC"/>
</dbReference>
<dbReference type="GO" id="GO:0005525">
    <property type="term" value="F:GTP binding"/>
    <property type="evidence" value="ECO:0007669"/>
    <property type="project" value="UniProtKB-KW"/>
</dbReference>
<dbReference type="CDD" id="cd04146">
    <property type="entry name" value="RERG_RasL11_like"/>
    <property type="match status" value="1"/>
</dbReference>
<dbReference type="FunFam" id="3.40.50.300:FF:001016">
    <property type="entry name" value="ras-like protein family member 12"/>
    <property type="match status" value="1"/>
</dbReference>
<dbReference type="Gene3D" id="3.40.50.300">
    <property type="entry name" value="P-loop containing nucleotide triphosphate hydrolases"/>
    <property type="match status" value="1"/>
</dbReference>
<dbReference type="InterPro" id="IPR027417">
    <property type="entry name" value="P-loop_NTPase"/>
</dbReference>
<dbReference type="InterPro" id="IPR051065">
    <property type="entry name" value="Ras-related_GTPase"/>
</dbReference>
<dbReference type="InterPro" id="IPR005225">
    <property type="entry name" value="Small_GTP-bd"/>
</dbReference>
<dbReference type="InterPro" id="IPR001806">
    <property type="entry name" value="Small_GTPase"/>
</dbReference>
<dbReference type="NCBIfam" id="TIGR00231">
    <property type="entry name" value="small_GTP"/>
    <property type="match status" value="1"/>
</dbReference>
<dbReference type="PANTHER" id="PTHR45704">
    <property type="entry name" value="RAS-LIKE FAMILY MEMBER 11"/>
    <property type="match status" value="1"/>
</dbReference>
<dbReference type="Pfam" id="PF00071">
    <property type="entry name" value="Ras"/>
    <property type="match status" value="1"/>
</dbReference>
<dbReference type="PRINTS" id="PR00449">
    <property type="entry name" value="RASTRNSFRMNG"/>
</dbReference>
<dbReference type="SMART" id="SM00175">
    <property type="entry name" value="RAB"/>
    <property type="match status" value="1"/>
</dbReference>
<dbReference type="SMART" id="SM00173">
    <property type="entry name" value="RAS"/>
    <property type="match status" value="1"/>
</dbReference>
<dbReference type="SMART" id="SM00174">
    <property type="entry name" value="RHO"/>
    <property type="match status" value="1"/>
</dbReference>
<dbReference type="SUPFAM" id="SSF52540">
    <property type="entry name" value="P-loop containing nucleoside triphosphate hydrolases"/>
    <property type="match status" value="1"/>
</dbReference>
<dbReference type="PROSITE" id="PS51421">
    <property type="entry name" value="RAS"/>
    <property type="match status" value="1"/>
</dbReference>